<gene>
    <name type="primary">RNPC3</name>
    <name type="synonym">KIAA1839</name>
    <name type="synonym">RBM40</name>
    <name type="synonym">RNP</name>
    <name type="synonym">SNRNP65</name>
</gene>
<organism>
    <name type="scientific">Homo sapiens</name>
    <name type="common">Human</name>
    <dbReference type="NCBI Taxonomy" id="9606"/>
    <lineage>
        <taxon>Eukaryota</taxon>
        <taxon>Metazoa</taxon>
        <taxon>Chordata</taxon>
        <taxon>Craniata</taxon>
        <taxon>Vertebrata</taxon>
        <taxon>Euteleostomi</taxon>
        <taxon>Mammalia</taxon>
        <taxon>Eutheria</taxon>
        <taxon>Euarchontoglires</taxon>
        <taxon>Primates</taxon>
        <taxon>Haplorrhini</taxon>
        <taxon>Catarrhini</taxon>
        <taxon>Hominidae</taxon>
        <taxon>Homo</taxon>
    </lineage>
</organism>
<protein>
    <recommendedName>
        <fullName>RNA-binding region-containing protein 3</fullName>
    </recommendedName>
    <alternativeName>
        <fullName>RNA-binding motif protein 40</fullName>
        <shortName>RNA-binding protein 40</shortName>
    </alternativeName>
    <alternativeName>
        <fullName>U11/U12 small nuclear ribonucleoprotein 65 kDa protein</fullName>
        <shortName>U11/U12 snRNP 65 kDa protein</shortName>
        <shortName>U11/U12-65K</shortName>
    </alternativeName>
</protein>
<evidence type="ECO:0000255" key="1">
    <source>
        <dbReference type="PROSITE-ProRule" id="PRU00176"/>
    </source>
</evidence>
<evidence type="ECO:0000256" key="2">
    <source>
        <dbReference type="SAM" id="MobiDB-lite"/>
    </source>
</evidence>
<evidence type="ECO:0000269" key="3">
    <source>
    </source>
</evidence>
<evidence type="ECO:0000269" key="4">
    <source>
    </source>
</evidence>
<evidence type="ECO:0000269" key="5">
    <source>
    </source>
</evidence>
<evidence type="ECO:0000269" key="6">
    <source>
    </source>
</evidence>
<evidence type="ECO:0000269" key="7">
    <source>
    </source>
</evidence>
<evidence type="ECO:0000269" key="8">
    <source>
    </source>
</evidence>
<evidence type="ECO:0000303" key="9">
    <source>
    </source>
</evidence>
<evidence type="ECO:0000303" key="10">
    <source>
    </source>
</evidence>
<evidence type="ECO:0000305" key="11"/>
<evidence type="ECO:0007744" key="12">
    <source>
    </source>
</evidence>
<evidence type="ECO:0007744" key="13">
    <source>
    </source>
</evidence>
<evidence type="ECO:0007829" key="14">
    <source>
        <dbReference type="PDB" id="3EGN"/>
    </source>
</evidence>
<accession>Q96LT9</accession>
<accession>A8K1C9</accession>
<accession>D3DT74</accession>
<accession>Q5TZ87</accession>
<accession>Q96FK7</accession>
<accession>Q96JI8</accession>
<accession>Q9NSU7</accession>
<accession>Q9NXX2</accession>
<sequence>MAAPEQPLAISRGCTSSSSLSPPRGDRTLLVRHLPAELTAEEKEDLLKYFGAQSVRVLSDKGRLKHTAFATFPNEKAAIKALTRLHQLKLLGHTLVVEFAKEQDRVHSPCPTSGSEKKKRSDDPVEDDKEKKELGYLTVENGIAPNHGLTFPLNSCLKYMYPPPSSTILANIVNALASVPKFYVQVLHLMNKMNLPTPFGPITARPPMYEDYMPLHAPLPPTSPQPPEEPPLPDEDEELSSEESEYESTDDEDRQRMNKLMELANLQPKRPKTIKQRHVRKKRKIKDMLNTPLCPSHSSLHPVLLPSDVFDQPQPVGNKRIEFHISTDMPAAFKKDLEKEQNCEEKNHDLPATEVDASNIGFGKIFPKPNLDITEEIKEDSDEMPSECISRRELEKGRISREEMETLSVFRSYEPGEPNCRIYVKNLAKHVQEKDLKYIFGRYVDFSSETQRIMFDIRLMKEGRMKGQAFIGLPNEKAAAKALKEANGYVLFGKPMVVQFARSARPKQDPKEGKRKC</sequence>
<feature type="chain" id="PRO_0000311112" description="RNA-binding region-containing protein 3">
    <location>
        <begin position="1"/>
        <end position="517"/>
    </location>
</feature>
<feature type="domain" description="RRM 1" evidence="1">
    <location>
        <begin position="27"/>
        <end position="102"/>
    </location>
</feature>
<feature type="domain" description="RRM 2" evidence="1">
    <location>
        <begin position="420"/>
        <end position="503"/>
    </location>
</feature>
<feature type="region of interest" description="Necessary for interaction with PDCD7" evidence="5">
    <location>
        <begin position="1"/>
        <end position="257"/>
    </location>
</feature>
<feature type="region of interest" description="Disordered" evidence="2">
    <location>
        <begin position="1"/>
        <end position="26"/>
    </location>
</feature>
<feature type="region of interest" description="Disordered" evidence="2">
    <location>
        <begin position="106"/>
        <end position="130"/>
    </location>
</feature>
<feature type="region of interest" description="Necessary for binding to m(7)G-capped U12 snRNA">
    <location>
        <begin position="211"/>
        <end position="380"/>
    </location>
</feature>
<feature type="region of interest" description="Disordered" evidence="2">
    <location>
        <begin position="213"/>
        <end position="254"/>
    </location>
</feature>
<feature type="compositionally biased region" description="Basic and acidic residues" evidence="2">
    <location>
        <begin position="115"/>
        <end position="130"/>
    </location>
</feature>
<feature type="compositionally biased region" description="Pro residues" evidence="2">
    <location>
        <begin position="217"/>
        <end position="230"/>
    </location>
</feature>
<feature type="compositionally biased region" description="Acidic residues" evidence="2">
    <location>
        <begin position="231"/>
        <end position="252"/>
    </location>
</feature>
<feature type="modified residue" description="Phosphoserine" evidence="12 13">
    <location>
        <position position="21"/>
    </location>
</feature>
<feature type="modified residue" description="Phosphoserine" evidence="12">
    <location>
        <position position="108"/>
    </location>
</feature>
<feature type="splice variant" id="VSP_053413" description="In isoform 2." evidence="9 10">
    <location>
        <position position="298"/>
    </location>
</feature>
<feature type="sequence variant" id="VAR_081540" description="In CPHD7; impairs binding to U12 and U6atac small nuclear RNAs; leads to a partial defect in the folding of RRM 2 domain and reduced stability of the full-length protein; dbSNP:rs370930012." evidence="7 8">
    <original>P</original>
    <variation>T</variation>
    <location>
        <position position="474"/>
    </location>
</feature>
<feature type="sequence variant" id="VAR_081541" description="In CPHD7; reduced expression due to nonsense-mediated mRNA decay; impairs binding to U12 and U6atac small nuclear RNAs." evidence="7 8">
    <location>
        <begin position="502"/>
        <end position="517"/>
    </location>
</feature>
<feature type="sequence conflict" description="In Ref. 4; BAA90885." evidence="11" ref="4">
    <original>R</original>
    <variation>K</variation>
    <location>
        <position position="392"/>
    </location>
</feature>
<feature type="helix" evidence="14">
    <location>
        <begin position="391"/>
        <end position="397"/>
    </location>
</feature>
<feature type="helix" evidence="14">
    <location>
        <begin position="401"/>
        <end position="406"/>
    </location>
</feature>
<feature type="helix" evidence="14">
    <location>
        <begin position="408"/>
        <end position="410"/>
    </location>
</feature>
<feature type="strand" evidence="14">
    <location>
        <begin position="420"/>
        <end position="427"/>
    </location>
</feature>
<feature type="helix" evidence="14">
    <location>
        <begin position="433"/>
        <end position="440"/>
    </location>
</feature>
<feature type="helix" evidence="14">
    <location>
        <begin position="441"/>
        <end position="443"/>
    </location>
</feature>
<feature type="helix" evidence="14">
    <location>
        <begin position="449"/>
        <end position="454"/>
    </location>
</feature>
<feature type="strand" evidence="14">
    <location>
        <begin position="456"/>
        <end position="462"/>
    </location>
</feature>
<feature type="turn" evidence="14">
    <location>
        <begin position="463"/>
        <end position="465"/>
    </location>
</feature>
<feature type="strand" evidence="14">
    <location>
        <begin position="466"/>
        <end position="472"/>
    </location>
</feature>
<feature type="helix" evidence="14">
    <location>
        <begin position="476"/>
        <end position="486"/>
    </location>
</feature>
<feature type="strand" evidence="14">
    <location>
        <begin position="489"/>
        <end position="491"/>
    </location>
</feature>
<feature type="strand" evidence="14">
    <location>
        <begin position="497"/>
        <end position="500"/>
    </location>
</feature>
<reference key="1">
    <citation type="journal article" date="2003" name="Biochem. Genet.">
        <title>Cloning and identification of a novel human RNPC3 gene that encodes a protein with two RRM domains and is expressed in the cell nucleus.</title>
        <authorList>
            <person name="Zhao E."/>
            <person name="Li J."/>
            <person name="Xie Y."/>
            <person name="Jin W."/>
            <person name="Zhang Z."/>
            <person name="Chen J."/>
            <person name="Zeng L."/>
            <person name="Yin G."/>
            <person name="Qian J."/>
            <person name="Wu H."/>
            <person name="Ying K."/>
            <person name="Zhao R.C."/>
            <person name="Mao Y."/>
        </authorList>
    </citation>
    <scope>NUCLEOTIDE SEQUENCE [MRNA] (ISOFORM 1)</scope>
    <scope>SUBCELLULAR LOCATION</scope>
    <scope>TISSUE SPECIFICITY</scope>
    <source>
        <tissue>Fetal brain</tissue>
    </source>
</reference>
<reference key="2">
    <citation type="journal article" date="2004" name="RNA">
        <title>The human 18S U11/U12 snRNP contains a set of novel proteins not found in the U2-dependent spliceosome.</title>
        <authorList>
            <person name="Will C.L."/>
            <person name="Schneider C."/>
            <person name="Hossbach M."/>
            <person name="Urlaub H."/>
            <person name="Rauhut R."/>
            <person name="Elbashir S."/>
            <person name="Tuschl T."/>
            <person name="Luehrmann R."/>
        </authorList>
    </citation>
    <scope>NUCLEOTIDE SEQUENCE [MRNA] (ISOFORM 1)</scope>
    <scope>IDENTIFICATION IN A COMPLEX WITH THE U11/U12 SPLICEOSOME</scope>
    <scope>IDENTIFICATION BY MASS SPECTROMETRY</scope>
</reference>
<reference key="3">
    <citation type="journal article" date="2001" name="DNA Res.">
        <title>Prediction of the coding sequences of unidentified human genes. XX. The complete sequences of 100 new cDNA clones from brain which code for large proteins in vitro.</title>
        <authorList>
            <person name="Nagase T."/>
            <person name="Nakayama M."/>
            <person name="Nakajima D."/>
            <person name="Kikuno R."/>
            <person name="Ohara O."/>
        </authorList>
    </citation>
    <scope>NUCLEOTIDE SEQUENCE [LARGE SCALE MRNA] (ISOFORM 1)</scope>
    <source>
        <tissue>Brain</tissue>
    </source>
</reference>
<reference key="4">
    <citation type="journal article" date="2004" name="Nat. Genet.">
        <title>Complete sequencing and characterization of 21,243 full-length human cDNAs.</title>
        <authorList>
            <person name="Ota T."/>
            <person name="Suzuki Y."/>
            <person name="Nishikawa T."/>
            <person name="Otsuki T."/>
            <person name="Sugiyama T."/>
            <person name="Irie R."/>
            <person name="Wakamatsu A."/>
            <person name="Hayashi K."/>
            <person name="Sato H."/>
            <person name="Nagai K."/>
            <person name="Kimura K."/>
            <person name="Makita H."/>
            <person name="Sekine M."/>
            <person name="Obayashi M."/>
            <person name="Nishi T."/>
            <person name="Shibahara T."/>
            <person name="Tanaka T."/>
            <person name="Ishii S."/>
            <person name="Yamamoto J."/>
            <person name="Saito K."/>
            <person name="Kawai Y."/>
            <person name="Isono Y."/>
            <person name="Nakamura Y."/>
            <person name="Nagahari K."/>
            <person name="Murakami K."/>
            <person name="Yasuda T."/>
            <person name="Iwayanagi T."/>
            <person name="Wagatsuma M."/>
            <person name="Shiratori A."/>
            <person name="Sudo H."/>
            <person name="Hosoiri T."/>
            <person name="Kaku Y."/>
            <person name="Kodaira H."/>
            <person name="Kondo H."/>
            <person name="Sugawara M."/>
            <person name="Takahashi M."/>
            <person name="Kanda K."/>
            <person name="Yokoi T."/>
            <person name="Furuya T."/>
            <person name="Kikkawa E."/>
            <person name="Omura Y."/>
            <person name="Abe K."/>
            <person name="Kamihara K."/>
            <person name="Katsuta N."/>
            <person name="Sato K."/>
            <person name="Tanikawa M."/>
            <person name="Yamazaki M."/>
            <person name="Ninomiya K."/>
            <person name="Ishibashi T."/>
            <person name="Yamashita H."/>
            <person name="Murakawa K."/>
            <person name="Fujimori K."/>
            <person name="Tanai H."/>
            <person name="Kimata M."/>
            <person name="Watanabe M."/>
            <person name="Hiraoka S."/>
            <person name="Chiba Y."/>
            <person name="Ishida S."/>
            <person name="Ono Y."/>
            <person name="Takiguchi S."/>
            <person name="Watanabe S."/>
            <person name="Yosida M."/>
            <person name="Hotuta T."/>
            <person name="Kusano J."/>
            <person name="Kanehori K."/>
            <person name="Takahashi-Fujii A."/>
            <person name="Hara H."/>
            <person name="Tanase T.-O."/>
            <person name="Nomura Y."/>
            <person name="Togiya S."/>
            <person name="Komai F."/>
            <person name="Hara R."/>
            <person name="Takeuchi K."/>
            <person name="Arita M."/>
            <person name="Imose N."/>
            <person name="Musashino K."/>
            <person name="Yuuki H."/>
            <person name="Oshima A."/>
            <person name="Sasaki N."/>
            <person name="Aotsuka S."/>
            <person name="Yoshikawa Y."/>
            <person name="Matsunawa H."/>
            <person name="Ichihara T."/>
            <person name="Shiohata N."/>
            <person name="Sano S."/>
            <person name="Moriya S."/>
            <person name="Momiyama H."/>
            <person name="Satoh N."/>
            <person name="Takami S."/>
            <person name="Terashima Y."/>
            <person name="Suzuki O."/>
            <person name="Nakagawa S."/>
            <person name="Senoh A."/>
            <person name="Mizoguchi H."/>
            <person name="Goto Y."/>
            <person name="Shimizu F."/>
            <person name="Wakebe H."/>
            <person name="Hishigaki H."/>
            <person name="Watanabe T."/>
            <person name="Sugiyama A."/>
            <person name="Takemoto M."/>
            <person name="Kawakami B."/>
            <person name="Yamazaki M."/>
            <person name="Watanabe K."/>
            <person name="Kumagai A."/>
            <person name="Itakura S."/>
            <person name="Fukuzumi Y."/>
            <person name="Fujimori Y."/>
            <person name="Komiyama M."/>
            <person name="Tashiro H."/>
            <person name="Tanigami A."/>
            <person name="Fujiwara T."/>
            <person name="Ono T."/>
            <person name="Yamada K."/>
            <person name="Fujii Y."/>
            <person name="Ozaki K."/>
            <person name="Hirao M."/>
            <person name="Ohmori Y."/>
            <person name="Kawabata A."/>
            <person name="Hikiji T."/>
            <person name="Kobatake N."/>
            <person name="Inagaki H."/>
            <person name="Ikema Y."/>
            <person name="Okamoto S."/>
            <person name="Okitani R."/>
            <person name="Kawakami T."/>
            <person name="Noguchi S."/>
            <person name="Itoh T."/>
            <person name="Shigeta K."/>
            <person name="Senba T."/>
            <person name="Matsumura K."/>
            <person name="Nakajima Y."/>
            <person name="Mizuno T."/>
            <person name="Morinaga M."/>
            <person name="Sasaki M."/>
            <person name="Togashi T."/>
            <person name="Oyama M."/>
            <person name="Hata H."/>
            <person name="Watanabe M."/>
            <person name="Komatsu T."/>
            <person name="Mizushima-Sugano J."/>
            <person name="Satoh T."/>
            <person name="Shirai Y."/>
            <person name="Takahashi Y."/>
            <person name="Nakagawa K."/>
            <person name="Okumura K."/>
            <person name="Nagase T."/>
            <person name="Nomura N."/>
            <person name="Kikuchi H."/>
            <person name="Masuho Y."/>
            <person name="Yamashita R."/>
            <person name="Nakai K."/>
            <person name="Yada T."/>
            <person name="Nakamura Y."/>
            <person name="Ohara O."/>
            <person name="Isogai T."/>
            <person name="Sugano S."/>
        </authorList>
    </citation>
    <scope>NUCLEOTIDE SEQUENCE [LARGE SCALE MRNA] (ISOFORMS 1 AND 2)</scope>
    <source>
        <tissue>Adipose tissue</tissue>
        <tissue>Brain</tissue>
        <tissue>Cerebellum</tissue>
    </source>
</reference>
<reference key="5">
    <citation type="journal article" date="2006" name="Nature">
        <title>The DNA sequence and biological annotation of human chromosome 1.</title>
        <authorList>
            <person name="Gregory S.G."/>
            <person name="Barlow K.F."/>
            <person name="McLay K.E."/>
            <person name="Kaul R."/>
            <person name="Swarbreck D."/>
            <person name="Dunham A."/>
            <person name="Scott C.E."/>
            <person name="Howe K.L."/>
            <person name="Woodfine K."/>
            <person name="Spencer C.C.A."/>
            <person name="Jones M.C."/>
            <person name="Gillson C."/>
            <person name="Searle S."/>
            <person name="Zhou Y."/>
            <person name="Kokocinski F."/>
            <person name="McDonald L."/>
            <person name="Evans R."/>
            <person name="Phillips K."/>
            <person name="Atkinson A."/>
            <person name="Cooper R."/>
            <person name="Jones C."/>
            <person name="Hall R.E."/>
            <person name="Andrews T.D."/>
            <person name="Lloyd C."/>
            <person name="Ainscough R."/>
            <person name="Almeida J.P."/>
            <person name="Ambrose K.D."/>
            <person name="Anderson F."/>
            <person name="Andrew R.W."/>
            <person name="Ashwell R.I.S."/>
            <person name="Aubin K."/>
            <person name="Babbage A.K."/>
            <person name="Bagguley C.L."/>
            <person name="Bailey J."/>
            <person name="Beasley H."/>
            <person name="Bethel G."/>
            <person name="Bird C.P."/>
            <person name="Bray-Allen S."/>
            <person name="Brown J.Y."/>
            <person name="Brown A.J."/>
            <person name="Buckley D."/>
            <person name="Burton J."/>
            <person name="Bye J."/>
            <person name="Carder C."/>
            <person name="Chapman J.C."/>
            <person name="Clark S.Y."/>
            <person name="Clarke G."/>
            <person name="Clee C."/>
            <person name="Cobley V."/>
            <person name="Collier R.E."/>
            <person name="Corby N."/>
            <person name="Coville G.J."/>
            <person name="Davies J."/>
            <person name="Deadman R."/>
            <person name="Dunn M."/>
            <person name="Earthrowl M."/>
            <person name="Ellington A.G."/>
            <person name="Errington H."/>
            <person name="Frankish A."/>
            <person name="Frankland J."/>
            <person name="French L."/>
            <person name="Garner P."/>
            <person name="Garnett J."/>
            <person name="Gay L."/>
            <person name="Ghori M.R.J."/>
            <person name="Gibson R."/>
            <person name="Gilby L.M."/>
            <person name="Gillett W."/>
            <person name="Glithero R.J."/>
            <person name="Grafham D.V."/>
            <person name="Griffiths C."/>
            <person name="Griffiths-Jones S."/>
            <person name="Grocock R."/>
            <person name="Hammond S."/>
            <person name="Harrison E.S.I."/>
            <person name="Hart E."/>
            <person name="Haugen E."/>
            <person name="Heath P.D."/>
            <person name="Holmes S."/>
            <person name="Holt K."/>
            <person name="Howden P.J."/>
            <person name="Hunt A.R."/>
            <person name="Hunt S.E."/>
            <person name="Hunter G."/>
            <person name="Isherwood J."/>
            <person name="James R."/>
            <person name="Johnson C."/>
            <person name="Johnson D."/>
            <person name="Joy A."/>
            <person name="Kay M."/>
            <person name="Kershaw J.K."/>
            <person name="Kibukawa M."/>
            <person name="Kimberley A.M."/>
            <person name="King A."/>
            <person name="Knights A.J."/>
            <person name="Lad H."/>
            <person name="Laird G."/>
            <person name="Lawlor S."/>
            <person name="Leongamornlert D.A."/>
            <person name="Lloyd D.M."/>
            <person name="Loveland J."/>
            <person name="Lovell J."/>
            <person name="Lush M.J."/>
            <person name="Lyne R."/>
            <person name="Martin S."/>
            <person name="Mashreghi-Mohammadi M."/>
            <person name="Matthews L."/>
            <person name="Matthews N.S.W."/>
            <person name="McLaren S."/>
            <person name="Milne S."/>
            <person name="Mistry S."/>
            <person name="Moore M.J.F."/>
            <person name="Nickerson T."/>
            <person name="O'Dell C.N."/>
            <person name="Oliver K."/>
            <person name="Palmeiri A."/>
            <person name="Palmer S.A."/>
            <person name="Parker A."/>
            <person name="Patel D."/>
            <person name="Pearce A.V."/>
            <person name="Peck A.I."/>
            <person name="Pelan S."/>
            <person name="Phelps K."/>
            <person name="Phillimore B.J."/>
            <person name="Plumb R."/>
            <person name="Rajan J."/>
            <person name="Raymond C."/>
            <person name="Rouse G."/>
            <person name="Saenphimmachak C."/>
            <person name="Sehra H.K."/>
            <person name="Sheridan E."/>
            <person name="Shownkeen R."/>
            <person name="Sims S."/>
            <person name="Skuce C.D."/>
            <person name="Smith M."/>
            <person name="Steward C."/>
            <person name="Subramanian S."/>
            <person name="Sycamore N."/>
            <person name="Tracey A."/>
            <person name="Tromans A."/>
            <person name="Van Helmond Z."/>
            <person name="Wall M."/>
            <person name="Wallis J.M."/>
            <person name="White S."/>
            <person name="Whitehead S.L."/>
            <person name="Wilkinson J.E."/>
            <person name="Willey D.L."/>
            <person name="Williams H."/>
            <person name="Wilming L."/>
            <person name="Wray P.W."/>
            <person name="Wu Z."/>
            <person name="Coulson A."/>
            <person name="Vaudin M."/>
            <person name="Sulston J.E."/>
            <person name="Durbin R.M."/>
            <person name="Hubbard T."/>
            <person name="Wooster R."/>
            <person name="Dunham I."/>
            <person name="Carter N.P."/>
            <person name="McVean G."/>
            <person name="Ross M.T."/>
            <person name="Harrow J."/>
            <person name="Olson M.V."/>
            <person name="Beck S."/>
            <person name="Rogers J."/>
            <person name="Bentley D.R."/>
        </authorList>
    </citation>
    <scope>NUCLEOTIDE SEQUENCE [LARGE SCALE GENOMIC DNA]</scope>
</reference>
<reference key="6">
    <citation type="submission" date="2005-09" db="EMBL/GenBank/DDBJ databases">
        <authorList>
            <person name="Mural R.J."/>
            <person name="Istrail S."/>
            <person name="Sutton G.G."/>
            <person name="Florea L."/>
            <person name="Halpern A.L."/>
            <person name="Mobarry C.M."/>
            <person name="Lippert R."/>
            <person name="Walenz B."/>
            <person name="Shatkay H."/>
            <person name="Dew I."/>
            <person name="Miller J.R."/>
            <person name="Flanigan M.J."/>
            <person name="Edwards N.J."/>
            <person name="Bolanos R."/>
            <person name="Fasulo D."/>
            <person name="Halldorsson B.V."/>
            <person name="Hannenhalli S."/>
            <person name="Turner R."/>
            <person name="Yooseph S."/>
            <person name="Lu F."/>
            <person name="Nusskern D.R."/>
            <person name="Shue B.C."/>
            <person name="Zheng X.H."/>
            <person name="Zhong F."/>
            <person name="Delcher A.L."/>
            <person name="Huson D.H."/>
            <person name="Kravitz S.A."/>
            <person name="Mouchard L."/>
            <person name="Reinert K."/>
            <person name="Remington K.A."/>
            <person name="Clark A.G."/>
            <person name="Waterman M.S."/>
            <person name="Eichler E.E."/>
            <person name="Adams M.D."/>
            <person name="Hunkapiller M.W."/>
            <person name="Myers E.W."/>
            <person name="Venter J.C."/>
        </authorList>
    </citation>
    <scope>NUCLEOTIDE SEQUENCE [LARGE SCALE GENOMIC DNA]</scope>
</reference>
<reference key="7">
    <citation type="journal article" date="2004" name="Genome Res.">
        <title>The status, quality, and expansion of the NIH full-length cDNA project: the Mammalian Gene Collection (MGC).</title>
        <authorList>
            <consortium name="The MGC Project Team"/>
        </authorList>
    </citation>
    <scope>NUCLEOTIDE SEQUENCE [LARGE SCALE MRNA] (ISOFORM 1)</scope>
    <source>
        <tissue>Eye</tissue>
    </source>
</reference>
<reference key="8">
    <citation type="journal article" date="2007" name="BMC Genomics">
        <title>The full-ORF clone resource of the German cDNA consortium.</title>
        <authorList>
            <person name="Bechtel S."/>
            <person name="Rosenfelder H."/>
            <person name="Duda A."/>
            <person name="Schmidt C.P."/>
            <person name="Ernst U."/>
            <person name="Wellenreuther R."/>
            <person name="Mehrle A."/>
            <person name="Schuster C."/>
            <person name="Bahr A."/>
            <person name="Bloecker H."/>
            <person name="Heubner D."/>
            <person name="Hoerlein A."/>
            <person name="Michel G."/>
            <person name="Wedler H."/>
            <person name="Koehrer K."/>
            <person name="Ottenwaelder B."/>
            <person name="Poustka A."/>
            <person name="Wiemann S."/>
            <person name="Schupp I."/>
        </authorList>
    </citation>
    <scope>NUCLEOTIDE SEQUENCE [LARGE SCALE MRNA] OF 225-517 (ISOFORM 2)</scope>
    <source>
        <tissue>Testis</tissue>
    </source>
</reference>
<reference key="9">
    <citation type="journal article" date="2005" name="EMBO J.">
        <title>The U11/U12 snRNP 65K protein acts as a molecular bridge, binding the U12 snRNA and U11-59K protein.</title>
        <authorList>
            <person name="Benecke H."/>
            <person name="Luehrmann R."/>
            <person name="Will C.L."/>
        </authorList>
    </citation>
    <scope>FUNCTION</scope>
    <scope>INTERACTION WITH PDCD7</scope>
    <scope>IDENTIFICATION IN A COMPLEX WITH U12 SNRNA</scope>
    <scope>RNA-BINDING</scope>
</reference>
<reference key="10">
    <citation type="journal article" date="2010" name="Sci. Signal.">
        <title>Quantitative phosphoproteomics reveals widespread full phosphorylation site occupancy during mitosis.</title>
        <authorList>
            <person name="Olsen J.V."/>
            <person name="Vermeulen M."/>
            <person name="Santamaria A."/>
            <person name="Kumar C."/>
            <person name="Miller M.L."/>
            <person name="Jensen L.J."/>
            <person name="Gnad F."/>
            <person name="Cox J."/>
            <person name="Jensen T.S."/>
            <person name="Nigg E.A."/>
            <person name="Brunak S."/>
            <person name="Mann M."/>
        </authorList>
    </citation>
    <scope>IDENTIFICATION BY MASS SPECTROMETRY [LARGE SCALE ANALYSIS]</scope>
    <source>
        <tissue>Cervix carcinoma</tissue>
    </source>
</reference>
<reference key="11">
    <citation type="journal article" date="2013" name="J. Proteome Res.">
        <title>Toward a comprehensive characterization of a human cancer cell phosphoproteome.</title>
        <authorList>
            <person name="Zhou H."/>
            <person name="Di Palma S."/>
            <person name="Preisinger C."/>
            <person name="Peng M."/>
            <person name="Polat A.N."/>
            <person name="Heck A.J."/>
            <person name="Mohammed S."/>
        </authorList>
    </citation>
    <scope>PHOSPHORYLATION [LARGE SCALE ANALYSIS] AT SER-21 AND SER-108</scope>
    <scope>IDENTIFICATION BY MASS SPECTROMETRY [LARGE SCALE ANALYSIS]</scope>
    <source>
        <tissue>Cervix carcinoma</tissue>
        <tissue>Erythroleukemia</tissue>
    </source>
</reference>
<reference key="12">
    <citation type="journal article" date="2014" name="J. Proteomics">
        <title>An enzyme assisted RP-RPLC approach for in-depth analysis of human liver phosphoproteome.</title>
        <authorList>
            <person name="Bian Y."/>
            <person name="Song C."/>
            <person name="Cheng K."/>
            <person name="Dong M."/>
            <person name="Wang F."/>
            <person name="Huang J."/>
            <person name="Sun D."/>
            <person name="Wang L."/>
            <person name="Ye M."/>
            <person name="Zou H."/>
        </authorList>
    </citation>
    <scope>PHOSPHORYLATION [LARGE SCALE ANALYSIS] AT SER-21</scope>
    <scope>IDENTIFICATION BY MASS SPECTROMETRY [LARGE SCALE ANALYSIS]</scope>
    <source>
        <tissue>Liver</tissue>
    </source>
</reference>
<reference key="13">
    <citation type="journal article" date="2009" name="RNA">
        <title>Functional stabilization of an RNA recognition motif by a noncanonical N-terminal expansion.</title>
        <authorList>
            <person name="Netter C."/>
            <person name="Weber G."/>
            <person name="Benecke H."/>
            <person name="Wahl M.C."/>
        </authorList>
    </citation>
    <scope>X-RAY CRYSTALLOGRAPHY (2.5 ANGSTROMS) OF 380-517</scope>
    <scope>SUBUNIT</scope>
    <scope>FUNCTION</scope>
</reference>
<reference key="14">
    <citation type="journal article" date="2014" name="EMBO Mol. Med.">
        <title>Defective minor spliceosome mRNA processing results in isolated familial growth hormone deficiency.</title>
        <authorList>
            <person name="Argente J."/>
            <person name="Flores R."/>
            <person name="Gutierrez-Arumi A."/>
            <person name="Verma B."/>
            <person name="Martos-Moreno G.A."/>
            <person name="Cusco I."/>
            <person name="Oghabian A."/>
            <person name="Chowen J.A."/>
            <person name="Frilander M.J."/>
            <person name="Perez-Jurado L.A."/>
        </authorList>
    </citation>
    <scope>INVOLVEMENT IN CPHD7</scope>
    <scope>VARIANTS CPHD7 THR-474 AND 502-ARG--CYS-517 DEL</scope>
    <scope>FUNCTION</scope>
</reference>
<reference key="15">
    <citation type="journal article" date="2018" name="RNA">
        <title>Mutations in the U11/U12-65K protein associated with isolated growth hormone deficiency lead to structural destabilization and impaired binding of U12 snRNA.</title>
        <authorList>
            <person name="Norppa A.J."/>
            <person name="Kauppala T.M."/>
            <person name="Heikkinen H.A."/>
            <person name="Verma B."/>
            <person name="Iwai H."/>
            <person name="Frilander M.J."/>
        </authorList>
    </citation>
    <scope>CHARACTERIZATION OF VARIANTS CPHD7 THR-474 AND 502-ARG--CYS-517 DEL</scope>
    <scope>FUNCTION</scope>
    <scope>STRUCTURE BY NMR OF 381-516</scope>
</reference>
<name>RNPC3_HUMAN</name>
<proteinExistence type="evidence at protein level"/>
<comment type="function">
    <text evidence="5 6 7 8">Participates in pre-mRNA U12-dependent splicing, performed by the minor spliceosome which removes U12-type introns. U12-type introns comprises less than 1% of all non-coding sequences. Binds to the 3'-stem-loop of m(7)G-capped U12 snRNA.</text>
</comment>
<comment type="subunit">
    <text evidence="4 5 6">Component of the U11/U12 snRNPs that are part of the U12-type spliceosome. Found in a complex with m(7)G-capped U12 snRNA. Interacts with PDCD7.</text>
</comment>
<comment type="subcellular location">
    <subcellularLocation>
        <location evidence="3">Nucleus</location>
    </subcellularLocation>
</comment>
<comment type="alternative products">
    <event type="alternative splicing"/>
    <isoform>
        <id>Q96LT9-1</id>
        <name>1</name>
        <sequence type="displayed"/>
    </isoform>
    <isoform>
        <id>Q96LT9-2</id>
        <name>2</name>
        <sequence type="described" ref="VSP_053413"/>
    </isoform>
</comment>
<comment type="tissue specificity">
    <text evidence="3">Highly expressed in pancreas and kidney. Detected at lower levels in heart, brain, placenta, lung, liver, spleen, thymus, prostate, testis, ovary, small intestine, colon and leukocytes.</text>
</comment>
<comment type="disease" evidence="7 8">
    <disease id="DI-05359">
        <name>Pituitary hormone deficiency, combined or isolated, 7</name>
        <acronym>CPHD7</acronym>
        <description>An autosomal recessive deficiency of growth hormone characterized by severe postnatal growth failure, delayed bone age without bone dysplasia, and hypoplasia of the anterior pituitary.</description>
        <dbReference type="MIM" id="618160"/>
    </disease>
    <text>The disease is caused by variants affecting the gene represented in this entry.</text>
</comment>
<comment type="sequence caution" evidence="11">
    <conflict type="erroneous initiation">
        <sequence resource="EMBL-CDS" id="BAA90885"/>
    </conflict>
    <text>Truncated N-terminus.</text>
</comment>
<comment type="sequence caution" evidence="11">
    <conflict type="miscellaneous discrepancy">
        <sequence resource="EMBL-CDS" id="BAA90885"/>
    </conflict>
    <text>Potential poly-A sequence.</text>
</comment>
<comment type="sequence caution" evidence="11">
    <conflict type="erroneous initiation">
        <sequence resource="EMBL-CDS" id="BAB47468"/>
    </conflict>
    <text>Extended N-terminus.</text>
</comment>
<dbReference type="EMBL" id="AY099329">
    <property type="protein sequence ID" value="AAM45139.1"/>
    <property type="molecule type" value="mRNA"/>
</dbReference>
<dbReference type="EMBL" id="BK005195">
    <property type="protein sequence ID" value="DAA05493.1"/>
    <property type="molecule type" value="mRNA"/>
</dbReference>
<dbReference type="EMBL" id="AB058742">
    <property type="protein sequence ID" value="BAB47468.1"/>
    <property type="status" value="ALT_INIT"/>
    <property type="molecule type" value="mRNA"/>
</dbReference>
<dbReference type="EMBL" id="AK000015">
    <property type="protein sequence ID" value="BAA90885.1"/>
    <property type="status" value="ALT_SEQ"/>
    <property type="molecule type" value="mRNA"/>
</dbReference>
<dbReference type="EMBL" id="AK057799">
    <property type="protein sequence ID" value="BAB71580.1"/>
    <property type="molecule type" value="mRNA"/>
</dbReference>
<dbReference type="EMBL" id="AK289844">
    <property type="protein sequence ID" value="BAF82533.1"/>
    <property type="molecule type" value="mRNA"/>
</dbReference>
<dbReference type="EMBL" id="AC095032">
    <property type="status" value="NOT_ANNOTATED_CDS"/>
    <property type="molecule type" value="Genomic_DNA"/>
</dbReference>
<dbReference type="EMBL" id="AC105272">
    <property type="status" value="NOT_ANNOTATED_CDS"/>
    <property type="molecule type" value="Genomic_DNA"/>
</dbReference>
<dbReference type="EMBL" id="BX322653">
    <property type="status" value="NOT_ANNOTATED_CDS"/>
    <property type="molecule type" value="Genomic_DNA"/>
</dbReference>
<dbReference type="EMBL" id="CH471097">
    <property type="protein sequence ID" value="EAW72905.1"/>
    <property type="molecule type" value="Genomic_DNA"/>
</dbReference>
<dbReference type="EMBL" id="CH471097">
    <property type="protein sequence ID" value="EAW72901.1"/>
    <property type="molecule type" value="Genomic_DNA"/>
</dbReference>
<dbReference type="EMBL" id="CH471097">
    <property type="protein sequence ID" value="EAW72906.1"/>
    <property type="molecule type" value="Genomic_DNA"/>
</dbReference>
<dbReference type="EMBL" id="BC010697">
    <property type="protein sequence ID" value="AAH10697.2"/>
    <property type="molecule type" value="mRNA"/>
</dbReference>
<dbReference type="EMBL" id="AL137730">
    <property type="protein sequence ID" value="CAB70897.2"/>
    <property type="molecule type" value="mRNA"/>
</dbReference>
<dbReference type="CCDS" id="CCDS781.1">
    <molecule id="Q96LT9-1"/>
</dbReference>
<dbReference type="PIR" id="T46396">
    <property type="entry name" value="T46396"/>
</dbReference>
<dbReference type="RefSeq" id="NP_060089.1">
    <molecule id="Q96LT9-1"/>
    <property type="nucleotide sequence ID" value="NM_017619.4"/>
</dbReference>
<dbReference type="PDB" id="3EGN">
    <property type="method" value="X-ray"/>
    <property type="resolution" value="2.50 A"/>
    <property type="chains" value="A=380-517"/>
</dbReference>
<dbReference type="PDB" id="5OBN">
    <property type="method" value="NMR"/>
    <property type="chains" value="A=381-516"/>
</dbReference>
<dbReference type="PDBsum" id="3EGN"/>
<dbReference type="PDBsum" id="5OBN"/>
<dbReference type="SMR" id="Q96LT9"/>
<dbReference type="BioGRID" id="120740">
    <property type="interactions" value="51"/>
</dbReference>
<dbReference type="CORUM" id="Q96LT9"/>
<dbReference type="FunCoup" id="Q96LT9">
    <property type="interactions" value="2629"/>
</dbReference>
<dbReference type="IntAct" id="Q96LT9">
    <property type="interactions" value="43"/>
</dbReference>
<dbReference type="MINT" id="Q96LT9"/>
<dbReference type="STRING" id="9606.ENSP00000432886"/>
<dbReference type="GlyGen" id="Q96LT9">
    <property type="glycosylation" value="2 sites, 1 O-linked glycan (1 site)"/>
</dbReference>
<dbReference type="iPTMnet" id="Q96LT9"/>
<dbReference type="PhosphoSitePlus" id="Q96LT9"/>
<dbReference type="BioMuta" id="RNPC3"/>
<dbReference type="DMDM" id="74760946"/>
<dbReference type="jPOST" id="Q96LT9"/>
<dbReference type="MassIVE" id="Q96LT9"/>
<dbReference type="PaxDb" id="9606-ENSP00000432886"/>
<dbReference type="PeptideAtlas" id="Q96LT9"/>
<dbReference type="ProteomicsDB" id="1846"/>
<dbReference type="ProteomicsDB" id="77250">
    <molecule id="Q96LT9-1"/>
</dbReference>
<dbReference type="Pumba" id="Q96LT9"/>
<dbReference type="Antibodypedia" id="9690">
    <property type="antibodies" value="86 antibodies from 23 providers"/>
</dbReference>
<dbReference type="DNASU" id="55599"/>
<dbReference type="Ensembl" id="ENST00000423855.7">
    <molecule id="Q96LT9-1"/>
    <property type="protein sequence ID" value="ENSP00000391432.1"/>
    <property type="gene ID" value="ENSG00000185946.16"/>
</dbReference>
<dbReference type="Ensembl" id="ENST00000524631.5">
    <molecule id="Q96LT9-2"/>
    <property type="protein sequence ID" value="ENSP00000437278.1"/>
    <property type="gene ID" value="ENSG00000185946.16"/>
</dbReference>
<dbReference type="Ensembl" id="ENST00000533099.5">
    <molecule id="Q96LT9-1"/>
    <property type="protein sequence ID" value="ENSP00000432886.1"/>
    <property type="gene ID" value="ENSG00000185946.16"/>
</dbReference>
<dbReference type="GeneID" id="55599"/>
<dbReference type="KEGG" id="hsa:55599"/>
<dbReference type="MANE-Select" id="ENST00000423855.7">
    <property type="protein sequence ID" value="ENSP00000391432.1"/>
    <property type="RefSeq nucleotide sequence ID" value="NM_017619.4"/>
    <property type="RefSeq protein sequence ID" value="NP_060089.1"/>
</dbReference>
<dbReference type="UCSC" id="uc010oum.2">
    <molecule id="Q96LT9-1"/>
    <property type="organism name" value="human"/>
</dbReference>
<dbReference type="AGR" id="HGNC:18666"/>
<dbReference type="CTD" id="55599"/>
<dbReference type="DisGeNET" id="55599"/>
<dbReference type="GeneCards" id="RNPC3"/>
<dbReference type="HGNC" id="HGNC:18666">
    <property type="gene designation" value="RNPC3"/>
</dbReference>
<dbReference type="HPA" id="ENSG00000185946">
    <property type="expression patterns" value="Low tissue specificity"/>
</dbReference>
<dbReference type="MalaCards" id="RNPC3"/>
<dbReference type="MIM" id="618016">
    <property type="type" value="gene"/>
</dbReference>
<dbReference type="MIM" id="618160">
    <property type="type" value="phenotype"/>
</dbReference>
<dbReference type="neXtProt" id="NX_Q96LT9"/>
<dbReference type="OpenTargets" id="ENSG00000185946"/>
<dbReference type="Orphanet" id="231662">
    <property type="disease" value="Isolated growth hormone deficiency type IA"/>
</dbReference>
<dbReference type="PharmGKB" id="PA134865246"/>
<dbReference type="VEuPathDB" id="HostDB:ENSG00000185946"/>
<dbReference type="eggNOG" id="KOG4206">
    <property type="taxonomic scope" value="Eukaryota"/>
</dbReference>
<dbReference type="GeneTree" id="ENSGT00530000063786"/>
<dbReference type="HOGENOM" id="CLU_039888_2_1_1"/>
<dbReference type="InParanoid" id="Q96LT9"/>
<dbReference type="OMA" id="AINIRHE"/>
<dbReference type="OrthoDB" id="277802at2759"/>
<dbReference type="PAN-GO" id="Q96LT9">
    <property type="GO annotations" value="4 GO annotations based on evolutionary models"/>
</dbReference>
<dbReference type="PhylomeDB" id="Q96LT9"/>
<dbReference type="TreeFam" id="TF324298"/>
<dbReference type="PathwayCommons" id="Q96LT9"/>
<dbReference type="Reactome" id="R-HSA-72165">
    <property type="pathway name" value="mRNA Splicing - Minor Pathway"/>
</dbReference>
<dbReference type="SignaLink" id="Q96LT9"/>
<dbReference type="BioGRID-ORCS" id="55599">
    <property type="hits" value="705 hits in 1162 CRISPR screens"/>
</dbReference>
<dbReference type="ChiTaRS" id="RNPC3">
    <property type="organism name" value="human"/>
</dbReference>
<dbReference type="EvolutionaryTrace" id="Q96LT9"/>
<dbReference type="GenomeRNAi" id="55599"/>
<dbReference type="Pharos" id="Q96LT9">
    <property type="development level" value="Tbio"/>
</dbReference>
<dbReference type="PRO" id="PR:Q96LT9"/>
<dbReference type="Proteomes" id="UP000005640">
    <property type="component" value="Chromosome 1"/>
</dbReference>
<dbReference type="RNAct" id="Q96LT9">
    <property type="molecule type" value="protein"/>
</dbReference>
<dbReference type="Bgee" id="ENSG00000185946">
    <property type="expression patterns" value="Expressed in caput epididymis and 187 other cell types or tissues"/>
</dbReference>
<dbReference type="ExpressionAtlas" id="Q96LT9">
    <property type="expression patterns" value="baseline and differential"/>
</dbReference>
<dbReference type="GO" id="GO:0005654">
    <property type="term" value="C:nucleoplasm"/>
    <property type="evidence" value="ECO:0000314"/>
    <property type="project" value="HPA"/>
</dbReference>
<dbReference type="GO" id="GO:0005634">
    <property type="term" value="C:nucleus"/>
    <property type="evidence" value="ECO:0000314"/>
    <property type="project" value="MGI"/>
</dbReference>
<dbReference type="GO" id="GO:0005689">
    <property type="term" value="C:U12-type spliceosomal complex"/>
    <property type="evidence" value="ECO:0000314"/>
    <property type="project" value="UniProtKB"/>
</dbReference>
<dbReference type="GO" id="GO:0097157">
    <property type="term" value="F:pre-mRNA intronic binding"/>
    <property type="evidence" value="ECO:0000318"/>
    <property type="project" value="GO_Central"/>
</dbReference>
<dbReference type="GO" id="GO:0030626">
    <property type="term" value="F:U12 snRNA binding"/>
    <property type="evidence" value="ECO:0000318"/>
    <property type="project" value="GO_Central"/>
</dbReference>
<dbReference type="GO" id="GO:0000398">
    <property type="term" value="P:mRNA splicing, via spliceosome"/>
    <property type="evidence" value="ECO:0000318"/>
    <property type="project" value="GO_Central"/>
</dbReference>
<dbReference type="GO" id="GO:0008380">
    <property type="term" value="P:RNA splicing"/>
    <property type="evidence" value="ECO:0000305"/>
    <property type="project" value="UniProtKB"/>
</dbReference>
<dbReference type="CDD" id="cd12238">
    <property type="entry name" value="RRM1_RBM40_like"/>
    <property type="match status" value="1"/>
</dbReference>
<dbReference type="CDD" id="cd12239">
    <property type="entry name" value="RRM2_RBM40_like"/>
    <property type="match status" value="1"/>
</dbReference>
<dbReference type="FunFam" id="3.30.70.330:FF:000289">
    <property type="entry name" value="RNA-binding protein 40 isoform X1"/>
    <property type="match status" value="1"/>
</dbReference>
<dbReference type="FunFam" id="3.30.70.330:FF:000207">
    <property type="entry name" value="RNA-binding region (RNP1, RRM)-containing 3"/>
    <property type="match status" value="1"/>
</dbReference>
<dbReference type="Gene3D" id="3.30.70.330">
    <property type="match status" value="2"/>
</dbReference>
<dbReference type="Gene3D" id="6.10.250.610">
    <property type="match status" value="1"/>
</dbReference>
<dbReference type="InterPro" id="IPR012677">
    <property type="entry name" value="Nucleotide-bd_a/b_plait_sf"/>
</dbReference>
<dbReference type="InterPro" id="IPR035979">
    <property type="entry name" value="RBD_domain_sf"/>
</dbReference>
<dbReference type="InterPro" id="IPR034147">
    <property type="entry name" value="RBM40_RRM1"/>
</dbReference>
<dbReference type="InterPro" id="IPR045164">
    <property type="entry name" value="RBM41/RNPC3"/>
</dbReference>
<dbReference type="InterPro" id="IPR000504">
    <property type="entry name" value="RRM_dom"/>
</dbReference>
<dbReference type="PANTHER" id="PTHR16105">
    <property type="entry name" value="RNA-BINDING REGION-CONTAINING PROTEIN 3"/>
    <property type="match status" value="1"/>
</dbReference>
<dbReference type="PANTHER" id="PTHR16105:SF0">
    <property type="entry name" value="RNA-BINDING REGION-CONTAINING PROTEIN 3"/>
    <property type="match status" value="1"/>
</dbReference>
<dbReference type="Pfam" id="PF00076">
    <property type="entry name" value="RRM_1"/>
    <property type="match status" value="2"/>
</dbReference>
<dbReference type="SMART" id="SM00360">
    <property type="entry name" value="RRM"/>
    <property type="match status" value="2"/>
</dbReference>
<dbReference type="SUPFAM" id="SSF54928">
    <property type="entry name" value="RNA-binding domain, RBD"/>
    <property type="match status" value="2"/>
</dbReference>
<dbReference type="PROSITE" id="PS50102">
    <property type="entry name" value="RRM"/>
    <property type="match status" value="2"/>
</dbReference>
<keyword id="KW-0002">3D-structure</keyword>
<keyword id="KW-0025">Alternative splicing</keyword>
<keyword id="KW-0225">Disease variant</keyword>
<keyword id="KW-0242">Dwarfism</keyword>
<keyword id="KW-0507">mRNA processing</keyword>
<keyword id="KW-0508">mRNA splicing</keyword>
<keyword id="KW-0539">Nucleus</keyword>
<keyword id="KW-0597">Phosphoprotein</keyword>
<keyword id="KW-1267">Proteomics identification</keyword>
<keyword id="KW-1185">Reference proteome</keyword>
<keyword id="KW-0677">Repeat</keyword>
<keyword id="KW-0694">RNA-binding</keyword>
<keyword id="KW-0747">Spliceosome</keyword>